<comment type="subcellular location">
    <subcellularLocation>
        <location>Plastid</location>
        <location>Chloroplast</location>
    </subcellularLocation>
</comment>
<comment type="similarity">
    <text evidence="1">Belongs to the bacterial ribosomal protein bS16 family.</text>
</comment>
<proteinExistence type="inferred from homology"/>
<gene>
    <name evidence="1" type="primary">rps16</name>
</gene>
<keyword id="KW-0150">Chloroplast</keyword>
<keyword id="KW-0934">Plastid</keyword>
<keyword id="KW-0687">Ribonucleoprotein</keyword>
<keyword id="KW-0689">Ribosomal protein</keyword>
<reference key="1">
    <citation type="journal article" date="2006" name="BMC Genomics">
        <title>Complete plastid genome sequence of Daucus carota: implications for biotechnology and phylogeny of angiosperms.</title>
        <authorList>
            <person name="Ruhlman T."/>
            <person name="Lee S.-B."/>
            <person name="Jansen R.K."/>
            <person name="Hostetler J.B."/>
            <person name="Tallon L.J."/>
            <person name="Town C.D."/>
            <person name="Daniell H."/>
        </authorList>
    </citation>
    <scope>NUCLEOTIDE SEQUENCE [LARGE SCALE GENOMIC DNA]</scope>
    <source>
        <strain>cv. Danvers Half-long</strain>
    </source>
</reference>
<organism>
    <name type="scientific">Daucus carota</name>
    <name type="common">Wild carrot</name>
    <dbReference type="NCBI Taxonomy" id="4039"/>
    <lineage>
        <taxon>Eukaryota</taxon>
        <taxon>Viridiplantae</taxon>
        <taxon>Streptophyta</taxon>
        <taxon>Embryophyta</taxon>
        <taxon>Tracheophyta</taxon>
        <taxon>Spermatophyta</taxon>
        <taxon>Magnoliopsida</taxon>
        <taxon>eudicotyledons</taxon>
        <taxon>Gunneridae</taxon>
        <taxon>Pentapetalae</taxon>
        <taxon>asterids</taxon>
        <taxon>campanulids</taxon>
        <taxon>Apiales</taxon>
        <taxon>Apiaceae</taxon>
        <taxon>Apioideae</taxon>
        <taxon>Scandiceae</taxon>
        <taxon>Daucinae</taxon>
        <taxon>Daucus</taxon>
        <taxon>Daucus sect. Daucus</taxon>
    </lineage>
</organism>
<accession>Q0G9Y0</accession>
<evidence type="ECO:0000255" key="1">
    <source>
        <dbReference type="HAMAP-Rule" id="MF_00385"/>
    </source>
</evidence>
<evidence type="ECO:0000305" key="2"/>
<sequence>MVKLRLKRCGRKQRAVYRIVAIDVRSRREGRDLRNVGFYDPIKNQSYLNVPAILYFLEKGAQPTGTVRDLLKKAEVFK</sequence>
<name>RR16_DAUCA</name>
<dbReference type="EMBL" id="DQ898156">
    <property type="protein sequence ID" value="ABI32406.1"/>
    <property type="molecule type" value="Genomic_DNA"/>
</dbReference>
<dbReference type="RefSeq" id="YP_740099.1">
    <property type="nucleotide sequence ID" value="NC_008325.1"/>
</dbReference>
<dbReference type="SMR" id="Q0G9Y0"/>
<dbReference type="GeneID" id="4266704"/>
<dbReference type="OMA" id="KQPIYRI"/>
<dbReference type="GO" id="GO:0009507">
    <property type="term" value="C:chloroplast"/>
    <property type="evidence" value="ECO:0007669"/>
    <property type="project" value="UniProtKB-SubCell"/>
</dbReference>
<dbReference type="GO" id="GO:0005739">
    <property type="term" value="C:mitochondrion"/>
    <property type="evidence" value="ECO:0007669"/>
    <property type="project" value="GOC"/>
</dbReference>
<dbReference type="GO" id="GO:0015935">
    <property type="term" value="C:small ribosomal subunit"/>
    <property type="evidence" value="ECO:0007669"/>
    <property type="project" value="TreeGrafter"/>
</dbReference>
<dbReference type="GO" id="GO:0003735">
    <property type="term" value="F:structural constituent of ribosome"/>
    <property type="evidence" value="ECO:0007669"/>
    <property type="project" value="InterPro"/>
</dbReference>
<dbReference type="GO" id="GO:0032543">
    <property type="term" value="P:mitochondrial translation"/>
    <property type="evidence" value="ECO:0007669"/>
    <property type="project" value="TreeGrafter"/>
</dbReference>
<dbReference type="FunFam" id="3.30.1320.10:FF:000003">
    <property type="entry name" value="30S ribosomal protein S16, chloroplastic"/>
    <property type="match status" value="1"/>
</dbReference>
<dbReference type="Gene3D" id="3.30.1320.10">
    <property type="match status" value="1"/>
</dbReference>
<dbReference type="HAMAP" id="MF_00385">
    <property type="entry name" value="Ribosomal_bS16"/>
    <property type="match status" value="1"/>
</dbReference>
<dbReference type="InterPro" id="IPR000307">
    <property type="entry name" value="Ribosomal_bS16"/>
</dbReference>
<dbReference type="InterPro" id="IPR020592">
    <property type="entry name" value="Ribosomal_bS16_CS"/>
</dbReference>
<dbReference type="InterPro" id="IPR023803">
    <property type="entry name" value="Ribosomal_bS16_dom_sf"/>
</dbReference>
<dbReference type="NCBIfam" id="TIGR00002">
    <property type="entry name" value="S16"/>
    <property type="match status" value="1"/>
</dbReference>
<dbReference type="PANTHER" id="PTHR12919">
    <property type="entry name" value="30S RIBOSOMAL PROTEIN S16"/>
    <property type="match status" value="1"/>
</dbReference>
<dbReference type="PANTHER" id="PTHR12919:SF20">
    <property type="entry name" value="SMALL RIBOSOMAL SUBUNIT PROTEIN BS16M"/>
    <property type="match status" value="1"/>
</dbReference>
<dbReference type="Pfam" id="PF00886">
    <property type="entry name" value="Ribosomal_S16"/>
    <property type="match status" value="1"/>
</dbReference>
<dbReference type="SUPFAM" id="SSF54565">
    <property type="entry name" value="Ribosomal protein S16"/>
    <property type="match status" value="1"/>
</dbReference>
<dbReference type="PROSITE" id="PS00732">
    <property type="entry name" value="RIBOSOMAL_S16"/>
    <property type="match status" value="1"/>
</dbReference>
<protein>
    <recommendedName>
        <fullName evidence="1">Small ribosomal subunit protein bS16c</fullName>
    </recommendedName>
    <alternativeName>
        <fullName evidence="2">30S ribosomal protein S16, chloroplastic</fullName>
    </alternativeName>
</protein>
<feature type="chain" id="PRO_0000276943" description="Small ribosomal subunit protein bS16c">
    <location>
        <begin position="1"/>
        <end position="78"/>
    </location>
</feature>
<geneLocation type="chloroplast"/>